<accession>Q1CN86</accession>
<keyword id="KW-0963">Cytoplasm</keyword>
<keyword id="KW-0251">Elongation factor</keyword>
<keyword id="KW-0342">GTP-binding</keyword>
<keyword id="KW-0378">Hydrolase</keyword>
<keyword id="KW-0460">Magnesium</keyword>
<keyword id="KW-0479">Metal-binding</keyword>
<keyword id="KW-0547">Nucleotide-binding</keyword>
<keyword id="KW-0648">Protein biosynthesis</keyword>
<name>EFTU1_YERPN</name>
<evidence type="ECO:0000250" key="1"/>
<evidence type="ECO:0000255" key="2">
    <source>
        <dbReference type="HAMAP-Rule" id="MF_00118"/>
    </source>
</evidence>
<evidence type="ECO:0000305" key="3"/>
<proteinExistence type="inferred from homology"/>
<sequence length="394" mass="43182">MSKEKFERTKPHVNVGTIGHVDHGKTTLTAAITTVLAKTYGGSARAFDQIDNAPEEKARGITINTSHVEYDTPARHYAHVDCPGHADYVKNMITGAAQMDGAILVVAATDGPMPQTREHILLGRQVGVPYIIVFLNKCDMVDDEELLELVEMEVRELLSQYDFPGDDTPVIRGSALKALEGDAEWEAKIIELAEALDSYIPQPERAIDRPFLLPIEDVFSISGRGTVVTGRVERGIVKVGEEVEIVGIIDTIKTTCTGVEMFRKLLDEGRAGENVGVLLRGTKRDDVQRGQVLAKPGSIKPHTKFESEVYILSKDEGGRHTPFFKGYRPQFYFRTIDVTGTIELPEGVEMVMPGDNVNMVVNLIAPIAMDDGLRFAIREGGRTVGAGVVAKVIE</sequence>
<dbReference type="EC" id="3.6.5.3" evidence="2"/>
<dbReference type="EMBL" id="CP000305">
    <property type="protein sequence ID" value="ABG16544.1"/>
    <property type="status" value="ALT_FRAME"/>
    <property type="molecule type" value="Genomic_DNA"/>
</dbReference>
<dbReference type="SMR" id="Q1CN86"/>
<dbReference type="KEGG" id="ypn:YPN_0211"/>
<dbReference type="HOGENOM" id="CLU_007265_0_0_6"/>
<dbReference type="Proteomes" id="UP000008936">
    <property type="component" value="Chromosome"/>
</dbReference>
<dbReference type="GO" id="GO:0005829">
    <property type="term" value="C:cytosol"/>
    <property type="evidence" value="ECO:0007669"/>
    <property type="project" value="TreeGrafter"/>
</dbReference>
<dbReference type="GO" id="GO:0005525">
    <property type="term" value="F:GTP binding"/>
    <property type="evidence" value="ECO:0007669"/>
    <property type="project" value="UniProtKB-UniRule"/>
</dbReference>
<dbReference type="GO" id="GO:0003924">
    <property type="term" value="F:GTPase activity"/>
    <property type="evidence" value="ECO:0007669"/>
    <property type="project" value="InterPro"/>
</dbReference>
<dbReference type="GO" id="GO:0097216">
    <property type="term" value="F:guanosine tetraphosphate binding"/>
    <property type="evidence" value="ECO:0007669"/>
    <property type="project" value="UniProtKB-ARBA"/>
</dbReference>
<dbReference type="GO" id="GO:0003746">
    <property type="term" value="F:translation elongation factor activity"/>
    <property type="evidence" value="ECO:0007669"/>
    <property type="project" value="UniProtKB-UniRule"/>
</dbReference>
<dbReference type="CDD" id="cd01884">
    <property type="entry name" value="EF_Tu"/>
    <property type="match status" value="1"/>
</dbReference>
<dbReference type="CDD" id="cd03697">
    <property type="entry name" value="EFTU_II"/>
    <property type="match status" value="1"/>
</dbReference>
<dbReference type="CDD" id="cd03707">
    <property type="entry name" value="EFTU_III"/>
    <property type="match status" value="1"/>
</dbReference>
<dbReference type="FunFam" id="2.40.30.10:FF:000001">
    <property type="entry name" value="Elongation factor Tu"/>
    <property type="match status" value="1"/>
</dbReference>
<dbReference type="FunFam" id="3.40.50.300:FF:000003">
    <property type="entry name" value="Elongation factor Tu"/>
    <property type="match status" value="1"/>
</dbReference>
<dbReference type="Gene3D" id="3.40.50.300">
    <property type="entry name" value="P-loop containing nucleotide triphosphate hydrolases"/>
    <property type="match status" value="1"/>
</dbReference>
<dbReference type="Gene3D" id="2.40.30.10">
    <property type="entry name" value="Translation factors"/>
    <property type="match status" value="2"/>
</dbReference>
<dbReference type="HAMAP" id="MF_00118_B">
    <property type="entry name" value="EF_Tu_B"/>
    <property type="match status" value="1"/>
</dbReference>
<dbReference type="InterPro" id="IPR041709">
    <property type="entry name" value="EF-Tu_GTP-bd"/>
</dbReference>
<dbReference type="InterPro" id="IPR050055">
    <property type="entry name" value="EF-Tu_GTPase"/>
</dbReference>
<dbReference type="InterPro" id="IPR004161">
    <property type="entry name" value="EFTu-like_2"/>
</dbReference>
<dbReference type="InterPro" id="IPR033720">
    <property type="entry name" value="EFTU_2"/>
</dbReference>
<dbReference type="InterPro" id="IPR031157">
    <property type="entry name" value="G_TR_CS"/>
</dbReference>
<dbReference type="InterPro" id="IPR027417">
    <property type="entry name" value="P-loop_NTPase"/>
</dbReference>
<dbReference type="InterPro" id="IPR005225">
    <property type="entry name" value="Small_GTP-bd"/>
</dbReference>
<dbReference type="InterPro" id="IPR000795">
    <property type="entry name" value="T_Tr_GTP-bd_dom"/>
</dbReference>
<dbReference type="InterPro" id="IPR009000">
    <property type="entry name" value="Transl_B-barrel_sf"/>
</dbReference>
<dbReference type="InterPro" id="IPR009001">
    <property type="entry name" value="Transl_elong_EF1A/Init_IF2_C"/>
</dbReference>
<dbReference type="InterPro" id="IPR004541">
    <property type="entry name" value="Transl_elong_EFTu/EF1A_bac/org"/>
</dbReference>
<dbReference type="InterPro" id="IPR004160">
    <property type="entry name" value="Transl_elong_EFTu/EF1A_C"/>
</dbReference>
<dbReference type="NCBIfam" id="TIGR00485">
    <property type="entry name" value="EF-Tu"/>
    <property type="match status" value="1"/>
</dbReference>
<dbReference type="NCBIfam" id="NF000766">
    <property type="entry name" value="PRK00049.1"/>
    <property type="match status" value="1"/>
</dbReference>
<dbReference type="NCBIfam" id="NF009372">
    <property type="entry name" value="PRK12735.1"/>
    <property type="match status" value="1"/>
</dbReference>
<dbReference type="NCBIfam" id="NF009373">
    <property type="entry name" value="PRK12736.1"/>
    <property type="match status" value="1"/>
</dbReference>
<dbReference type="NCBIfam" id="TIGR00231">
    <property type="entry name" value="small_GTP"/>
    <property type="match status" value="1"/>
</dbReference>
<dbReference type="PANTHER" id="PTHR43721:SF22">
    <property type="entry name" value="ELONGATION FACTOR TU, MITOCHONDRIAL"/>
    <property type="match status" value="1"/>
</dbReference>
<dbReference type="PANTHER" id="PTHR43721">
    <property type="entry name" value="ELONGATION FACTOR TU-RELATED"/>
    <property type="match status" value="1"/>
</dbReference>
<dbReference type="Pfam" id="PF00009">
    <property type="entry name" value="GTP_EFTU"/>
    <property type="match status" value="1"/>
</dbReference>
<dbReference type="Pfam" id="PF03144">
    <property type="entry name" value="GTP_EFTU_D2"/>
    <property type="match status" value="1"/>
</dbReference>
<dbReference type="Pfam" id="PF03143">
    <property type="entry name" value="GTP_EFTU_D3"/>
    <property type="match status" value="1"/>
</dbReference>
<dbReference type="PRINTS" id="PR00315">
    <property type="entry name" value="ELONGATNFCT"/>
</dbReference>
<dbReference type="SUPFAM" id="SSF50465">
    <property type="entry name" value="EF-Tu/eEF-1alpha/eIF2-gamma C-terminal domain"/>
    <property type="match status" value="1"/>
</dbReference>
<dbReference type="SUPFAM" id="SSF52540">
    <property type="entry name" value="P-loop containing nucleoside triphosphate hydrolases"/>
    <property type="match status" value="1"/>
</dbReference>
<dbReference type="SUPFAM" id="SSF50447">
    <property type="entry name" value="Translation proteins"/>
    <property type="match status" value="1"/>
</dbReference>
<dbReference type="PROSITE" id="PS00301">
    <property type="entry name" value="G_TR_1"/>
    <property type="match status" value="1"/>
</dbReference>
<dbReference type="PROSITE" id="PS51722">
    <property type="entry name" value="G_TR_2"/>
    <property type="match status" value="1"/>
</dbReference>
<gene>
    <name evidence="2" type="primary">tuf1</name>
    <name type="ordered locus">YPN_0211</name>
</gene>
<organism>
    <name type="scientific">Yersinia pestis bv. Antiqua (strain Nepal516)</name>
    <dbReference type="NCBI Taxonomy" id="377628"/>
    <lineage>
        <taxon>Bacteria</taxon>
        <taxon>Pseudomonadati</taxon>
        <taxon>Pseudomonadota</taxon>
        <taxon>Gammaproteobacteria</taxon>
        <taxon>Enterobacterales</taxon>
        <taxon>Yersiniaceae</taxon>
        <taxon>Yersinia</taxon>
    </lineage>
</organism>
<reference key="1">
    <citation type="journal article" date="2006" name="J. Bacteriol.">
        <title>Complete genome sequence of Yersinia pestis strains Antiqua and Nepal516: evidence of gene reduction in an emerging pathogen.</title>
        <authorList>
            <person name="Chain P.S.G."/>
            <person name="Hu P."/>
            <person name="Malfatti S.A."/>
            <person name="Radnedge L."/>
            <person name="Larimer F."/>
            <person name="Vergez L.M."/>
            <person name="Worsham P."/>
            <person name="Chu M.C."/>
            <person name="Andersen G.L."/>
        </authorList>
    </citation>
    <scope>NUCLEOTIDE SEQUENCE [LARGE SCALE GENOMIC DNA]</scope>
    <source>
        <strain>Nepal516</strain>
    </source>
</reference>
<comment type="function">
    <text evidence="2">GTP hydrolase that promotes the GTP-dependent binding of aminoacyl-tRNA to the A-site of ribosomes during protein biosynthesis.</text>
</comment>
<comment type="catalytic activity">
    <reaction evidence="2">
        <text>GTP + H2O = GDP + phosphate + H(+)</text>
        <dbReference type="Rhea" id="RHEA:19669"/>
        <dbReference type="ChEBI" id="CHEBI:15377"/>
        <dbReference type="ChEBI" id="CHEBI:15378"/>
        <dbReference type="ChEBI" id="CHEBI:37565"/>
        <dbReference type="ChEBI" id="CHEBI:43474"/>
        <dbReference type="ChEBI" id="CHEBI:58189"/>
        <dbReference type="EC" id="3.6.5.3"/>
    </reaction>
    <physiologicalReaction direction="left-to-right" evidence="2">
        <dbReference type="Rhea" id="RHEA:19670"/>
    </physiologicalReaction>
</comment>
<comment type="subunit">
    <text evidence="2">Monomer.</text>
</comment>
<comment type="subcellular location">
    <subcellularLocation>
        <location evidence="2">Cytoplasm</location>
    </subcellularLocation>
</comment>
<comment type="similarity">
    <text evidence="2">Belongs to the TRAFAC class translation factor GTPase superfamily. Classic translation factor GTPase family. EF-Tu/EF-1A subfamily.</text>
</comment>
<comment type="sequence caution" evidence="3">
    <conflict type="frameshift">
        <sequence resource="EMBL-CDS" id="ABG16544"/>
    </conflict>
</comment>
<feature type="chain" id="PRO_0000337586" description="Elongation factor Tu 1">
    <location>
        <begin position="1"/>
        <end position="394"/>
    </location>
</feature>
<feature type="domain" description="tr-type G">
    <location>
        <begin position="10"/>
        <end position="204"/>
    </location>
</feature>
<feature type="region of interest" description="G1" evidence="1">
    <location>
        <begin position="19"/>
        <end position="26"/>
    </location>
</feature>
<feature type="region of interest" description="G2" evidence="1">
    <location>
        <begin position="60"/>
        <end position="64"/>
    </location>
</feature>
<feature type="region of interest" description="G3" evidence="1">
    <location>
        <begin position="81"/>
        <end position="84"/>
    </location>
</feature>
<feature type="region of interest" description="G4" evidence="1">
    <location>
        <begin position="136"/>
        <end position="139"/>
    </location>
</feature>
<feature type="region of interest" description="G5" evidence="1">
    <location>
        <begin position="174"/>
        <end position="176"/>
    </location>
</feature>
<feature type="binding site" evidence="2">
    <location>
        <begin position="19"/>
        <end position="26"/>
    </location>
    <ligand>
        <name>GTP</name>
        <dbReference type="ChEBI" id="CHEBI:37565"/>
    </ligand>
</feature>
<feature type="binding site" evidence="2">
    <location>
        <position position="26"/>
    </location>
    <ligand>
        <name>Mg(2+)</name>
        <dbReference type="ChEBI" id="CHEBI:18420"/>
    </ligand>
</feature>
<feature type="binding site" evidence="2">
    <location>
        <begin position="81"/>
        <end position="85"/>
    </location>
    <ligand>
        <name>GTP</name>
        <dbReference type="ChEBI" id="CHEBI:37565"/>
    </ligand>
</feature>
<feature type="binding site" evidence="2">
    <location>
        <begin position="136"/>
        <end position="139"/>
    </location>
    <ligand>
        <name>GTP</name>
        <dbReference type="ChEBI" id="CHEBI:37565"/>
    </ligand>
</feature>
<protein>
    <recommendedName>
        <fullName evidence="2">Elongation factor Tu 1</fullName>
        <shortName evidence="2">EF-Tu 1</shortName>
        <ecNumber evidence="2">3.6.5.3</ecNumber>
    </recommendedName>
</protein>